<protein>
    <recommendedName>
        <fullName>Putative uncharacterized protein DDB_G0291626</fullName>
    </recommendedName>
</protein>
<keyword id="KW-0325">Glycoprotein</keyword>
<keyword id="KW-1185">Reference proteome</keyword>
<keyword id="KW-0964">Secreted</keyword>
<keyword id="KW-0732">Signal</keyword>
<proteinExistence type="inferred from homology"/>
<dbReference type="EMBL" id="AAFI02000177">
    <property type="protein sequence ID" value="EAL61797.1"/>
    <property type="molecule type" value="Genomic_DNA"/>
</dbReference>
<dbReference type="RefSeq" id="XP_635229.1">
    <property type="nucleotide sequence ID" value="XM_630137.1"/>
</dbReference>
<dbReference type="GlyGen" id="Q54EL1">
    <property type="glycosylation" value="4 sites"/>
</dbReference>
<dbReference type="PaxDb" id="44689-DDB0215447"/>
<dbReference type="EnsemblProtists" id="EAL61797">
    <property type="protein sequence ID" value="EAL61797"/>
    <property type="gene ID" value="DDB_G0291626"/>
</dbReference>
<dbReference type="GeneID" id="8628175"/>
<dbReference type="KEGG" id="ddi:DDB_G0291626"/>
<dbReference type="dictyBase" id="DDB_G0291626"/>
<dbReference type="HOGENOM" id="CLU_2745371_0_0_1"/>
<dbReference type="InParanoid" id="Q54EL1"/>
<dbReference type="PRO" id="PR:Q54EL1"/>
<dbReference type="Proteomes" id="UP000002195">
    <property type="component" value="Chromosome 6"/>
</dbReference>
<dbReference type="GO" id="GO:0005576">
    <property type="term" value="C:extracellular region"/>
    <property type="evidence" value="ECO:0007669"/>
    <property type="project" value="UniProtKB-SubCell"/>
</dbReference>
<feature type="signal peptide" evidence="1">
    <location>
        <begin position="1"/>
        <end position="23"/>
    </location>
</feature>
<feature type="chain" id="PRO_0000346885" description="Putative uncharacterized protein DDB_G0291626">
    <location>
        <begin position="24"/>
        <end position="71"/>
    </location>
</feature>
<feature type="glycosylation site" description="N-linked (GlcNAc...) asparagine" evidence="1">
    <location>
        <position position="20"/>
    </location>
</feature>
<feature type="glycosylation site" description="N-linked (GlcNAc...) asparagine" evidence="1">
    <location>
        <position position="28"/>
    </location>
</feature>
<feature type="glycosylation site" description="N-linked (GlcNAc...) asparagine" evidence="1">
    <location>
        <position position="44"/>
    </location>
</feature>
<feature type="glycosylation site" description="N-linked (GlcNAc...) asparagine" evidence="1">
    <location>
        <position position="50"/>
    </location>
</feature>
<organism>
    <name type="scientific">Dictyostelium discoideum</name>
    <name type="common">Social amoeba</name>
    <dbReference type="NCBI Taxonomy" id="44689"/>
    <lineage>
        <taxon>Eukaryota</taxon>
        <taxon>Amoebozoa</taxon>
        <taxon>Evosea</taxon>
        <taxon>Eumycetozoa</taxon>
        <taxon>Dictyostelia</taxon>
        <taxon>Dictyosteliales</taxon>
        <taxon>Dictyosteliaceae</taxon>
        <taxon>Dictyostelium</taxon>
    </lineage>
</organism>
<name>Y5447_DICDI</name>
<reference key="1">
    <citation type="journal article" date="2005" name="Nature">
        <title>The genome of the social amoeba Dictyostelium discoideum.</title>
        <authorList>
            <person name="Eichinger L."/>
            <person name="Pachebat J.A."/>
            <person name="Gloeckner G."/>
            <person name="Rajandream M.A."/>
            <person name="Sucgang R."/>
            <person name="Berriman M."/>
            <person name="Song J."/>
            <person name="Olsen R."/>
            <person name="Szafranski K."/>
            <person name="Xu Q."/>
            <person name="Tunggal B."/>
            <person name="Kummerfeld S."/>
            <person name="Madera M."/>
            <person name="Konfortov B.A."/>
            <person name="Rivero F."/>
            <person name="Bankier A.T."/>
            <person name="Lehmann R."/>
            <person name="Hamlin N."/>
            <person name="Davies R."/>
            <person name="Gaudet P."/>
            <person name="Fey P."/>
            <person name="Pilcher K."/>
            <person name="Chen G."/>
            <person name="Saunders D."/>
            <person name="Sodergren E.J."/>
            <person name="Davis P."/>
            <person name="Kerhornou A."/>
            <person name="Nie X."/>
            <person name="Hall N."/>
            <person name="Anjard C."/>
            <person name="Hemphill L."/>
            <person name="Bason N."/>
            <person name="Farbrother P."/>
            <person name="Desany B."/>
            <person name="Just E."/>
            <person name="Morio T."/>
            <person name="Rost R."/>
            <person name="Churcher C.M."/>
            <person name="Cooper J."/>
            <person name="Haydock S."/>
            <person name="van Driessche N."/>
            <person name="Cronin A."/>
            <person name="Goodhead I."/>
            <person name="Muzny D.M."/>
            <person name="Mourier T."/>
            <person name="Pain A."/>
            <person name="Lu M."/>
            <person name="Harper D."/>
            <person name="Lindsay R."/>
            <person name="Hauser H."/>
            <person name="James K.D."/>
            <person name="Quiles M."/>
            <person name="Madan Babu M."/>
            <person name="Saito T."/>
            <person name="Buchrieser C."/>
            <person name="Wardroper A."/>
            <person name="Felder M."/>
            <person name="Thangavelu M."/>
            <person name="Johnson D."/>
            <person name="Knights A."/>
            <person name="Loulseged H."/>
            <person name="Mungall K.L."/>
            <person name="Oliver K."/>
            <person name="Price C."/>
            <person name="Quail M.A."/>
            <person name="Urushihara H."/>
            <person name="Hernandez J."/>
            <person name="Rabbinowitsch E."/>
            <person name="Steffen D."/>
            <person name="Sanders M."/>
            <person name="Ma J."/>
            <person name="Kohara Y."/>
            <person name="Sharp S."/>
            <person name="Simmonds M.N."/>
            <person name="Spiegler S."/>
            <person name="Tivey A."/>
            <person name="Sugano S."/>
            <person name="White B."/>
            <person name="Walker D."/>
            <person name="Woodward J.R."/>
            <person name="Winckler T."/>
            <person name="Tanaka Y."/>
            <person name="Shaulsky G."/>
            <person name="Schleicher M."/>
            <person name="Weinstock G.M."/>
            <person name="Rosenthal A."/>
            <person name="Cox E.C."/>
            <person name="Chisholm R.L."/>
            <person name="Gibbs R.A."/>
            <person name="Loomis W.F."/>
            <person name="Platzer M."/>
            <person name="Kay R.R."/>
            <person name="Williams J.G."/>
            <person name="Dear P.H."/>
            <person name="Noegel A.A."/>
            <person name="Barrell B.G."/>
            <person name="Kuspa A."/>
        </authorList>
    </citation>
    <scope>NUCLEOTIDE SEQUENCE [LARGE SCALE GENOMIC DNA]</scope>
    <source>
        <strain>AX4</strain>
    </source>
</reference>
<gene>
    <name type="ORF">DDB_G0291626</name>
</gene>
<evidence type="ECO:0000255" key="1"/>
<evidence type="ECO:0000305" key="2"/>
<comment type="subcellular location">
    <subcellularLocation>
        <location evidence="2">Secreted</location>
    </subcellularLocation>
</comment>
<sequence length="71" mass="8318">MTLLIILILKYLLCLENLKNISLQISKNNTINNINCENNFNNINKSYSINESNSAKNDFVKFLKFIFFHAF</sequence>
<accession>Q54EL1</accession>